<keyword id="KW-0378">Hydrolase</keyword>
<keyword id="KW-0479">Metal-binding</keyword>
<keyword id="KW-0823">Tryptophan catabolism</keyword>
<keyword id="KW-0862">Zinc</keyword>
<gene>
    <name evidence="1" type="primary">kynB</name>
    <name type="ordered locus">BMA10247_0100</name>
</gene>
<proteinExistence type="inferred from homology"/>
<organism>
    <name type="scientific">Burkholderia mallei (strain NCTC 10247)</name>
    <dbReference type="NCBI Taxonomy" id="320389"/>
    <lineage>
        <taxon>Bacteria</taxon>
        <taxon>Pseudomonadati</taxon>
        <taxon>Pseudomonadota</taxon>
        <taxon>Betaproteobacteria</taxon>
        <taxon>Burkholderiales</taxon>
        <taxon>Burkholderiaceae</taxon>
        <taxon>Burkholderia</taxon>
        <taxon>pseudomallei group</taxon>
    </lineage>
</organism>
<dbReference type="EC" id="3.5.1.9" evidence="1"/>
<dbReference type="EMBL" id="CP000548">
    <property type="protein sequence ID" value="ABO04524.1"/>
    <property type="molecule type" value="Genomic_DNA"/>
</dbReference>
<dbReference type="RefSeq" id="WP_004198883.1">
    <property type="nucleotide sequence ID" value="NZ_CP007802.1"/>
</dbReference>
<dbReference type="SMR" id="A3MHE3"/>
<dbReference type="GeneID" id="92978123"/>
<dbReference type="KEGG" id="bmaz:BM44_2876"/>
<dbReference type="KEGG" id="bmn:BMA10247_0100"/>
<dbReference type="PATRIC" id="fig|320389.8.peg.3246"/>
<dbReference type="UniPathway" id="UPA00333">
    <property type="reaction ID" value="UER00454"/>
</dbReference>
<dbReference type="GO" id="GO:0004061">
    <property type="term" value="F:arylformamidase activity"/>
    <property type="evidence" value="ECO:0000250"/>
    <property type="project" value="UniProtKB"/>
</dbReference>
<dbReference type="GO" id="GO:0004328">
    <property type="term" value="F:formamidase activity"/>
    <property type="evidence" value="ECO:0007669"/>
    <property type="project" value="InterPro"/>
</dbReference>
<dbReference type="GO" id="GO:0008270">
    <property type="term" value="F:zinc ion binding"/>
    <property type="evidence" value="ECO:0007669"/>
    <property type="project" value="UniProtKB-UniRule"/>
</dbReference>
<dbReference type="GO" id="GO:0043420">
    <property type="term" value="P:anthranilate metabolic process"/>
    <property type="evidence" value="ECO:0000250"/>
    <property type="project" value="UniProtKB"/>
</dbReference>
<dbReference type="GO" id="GO:0019441">
    <property type="term" value="P:L-tryptophan catabolic process to kynurenine"/>
    <property type="evidence" value="ECO:0000250"/>
    <property type="project" value="UniProtKB"/>
</dbReference>
<dbReference type="FunFam" id="3.50.30.50:FF:000001">
    <property type="entry name" value="Kynurenine formamidase"/>
    <property type="match status" value="1"/>
</dbReference>
<dbReference type="Gene3D" id="3.50.30.50">
    <property type="entry name" value="Putative cyclase"/>
    <property type="match status" value="1"/>
</dbReference>
<dbReference type="HAMAP" id="MF_01969">
    <property type="entry name" value="KynB"/>
    <property type="match status" value="1"/>
</dbReference>
<dbReference type="InterPro" id="IPR007325">
    <property type="entry name" value="KFase/CYL"/>
</dbReference>
<dbReference type="InterPro" id="IPR037175">
    <property type="entry name" value="KFase_sf"/>
</dbReference>
<dbReference type="InterPro" id="IPR017484">
    <property type="entry name" value="Kynurenine_formamidase_bac"/>
</dbReference>
<dbReference type="NCBIfam" id="TIGR03035">
    <property type="entry name" value="trp_arylform"/>
    <property type="match status" value="1"/>
</dbReference>
<dbReference type="PANTHER" id="PTHR31118">
    <property type="entry name" value="CYCLASE-LIKE PROTEIN 2"/>
    <property type="match status" value="1"/>
</dbReference>
<dbReference type="PANTHER" id="PTHR31118:SF32">
    <property type="entry name" value="KYNURENINE FORMAMIDASE"/>
    <property type="match status" value="1"/>
</dbReference>
<dbReference type="Pfam" id="PF04199">
    <property type="entry name" value="Cyclase"/>
    <property type="match status" value="1"/>
</dbReference>
<dbReference type="SUPFAM" id="SSF102198">
    <property type="entry name" value="Putative cyclase"/>
    <property type="match status" value="1"/>
</dbReference>
<protein>
    <recommendedName>
        <fullName evidence="1">Kynurenine formamidase</fullName>
        <shortName evidence="1">KFA</shortName>
        <shortName evidence="1">KFase</shortName>
        <ecNumber evidence="1">3.5.1.9</ecNumber>
    </recommendedName>
    <alternativeName>
        <fullName evidence="1">Arylformamidase</fullName>
    </alternativeName>
    <alternativeName>
        <fullName evidence="1">N-formylkynurenine formamidase</fullName>
        <shortName evidence="1">FKF</shortName>
    </alternativeName>
</protein>
<evidence type="ECO:0000255" key="1">
    <source>
        <dbReference type="HAMAP-Rule" id="MF_01969"/>
    </source>
</evidence>
<accession>A3MHE3</accession>
<sequence>MDTIWDISPPIAPATPVWPGDTPVGIERVWRIEAGSPVNVARVTLSPHTGAHADAPLHYDADGTPIGAVPLDAYLGRCRVIHCIGARSAVTPEHVRAALAGAPPRVLLRTYGQAPQHAWDSAFCAVAPETIDLLAAHGVRLVGIDTPSLDPQESKTMDAHRRIRAHRMAILEGLVLDEIAAGDYELIALPLKFATLDASPVRAVLRALPAAPR</sequence>
<feature type="chain" id="PRO_0000362106" description="Kynurenine formamidase">
    <location>
        <begin position="1"/>
        <end position="213"/>
    </location>
</feature>
<feature type="active site" description="Proton donor/acceptor" evidence="1">
    <location>
        <position position="58"/>
    </location>
</feature>
<feature type="binding site" evidence="1">
    <location>
        <position position="18"/>
    </location>
    <ligand>
        <name>substrate</name>
    </ligand>
</feature>
<feature type="binding site" evidence="1">
    <location>
        <position position="48"/>
    </location>
    <ligand>
        <name>Zn(2+)</name>
        <dbReference type="ChEBI" id="CHEBI:29105"/>
        <label>1</label>
    </ligand>
</feature>
<feature type="binding site" evidence="1">
    <location>
        <position position="52"/>
    </location>
    <ligand>
        <name>Zn(2+)</name>
        <dbReference type="ChEBI" id="CHEBI:29105"/>
        <label>1</label>
    </ligand>
</feature>
<feature type="binding site" evidence="1">
    <location>
        <position position="54"/>
    </location>
    <ligand>
        <name>Zn(2+)</name>
        <dbReference type="ChEBI" id="CHEBI:29105"/>
        <label>1</label>
    </ligand>
</feature>
<feature type="binding site" evidence="1">
    <location>
        <position position="54"/>
    </location>
    <ligand>
        <name>Zn(2+)</name>
        <dbReference type="ChEBI" id="CHEBI:29105"/>
        <label>2</label>
    </ligand>
</feature>
<feature type="binding site" evidence="1">
    <location>
        <position position="160"/>
    </location>
    <ligand>
        <name>Zn(2+)</name>
        <dbReference type="ChEBI" id="CHEBI:29105"/>
        <label>2</label>
    </ligand>
</feature>
<feature type="binding site" evidence="1">
    <location>
        <position position="172"/>
    </location>
    <ligand>
        <name>Zn(2+)</name>
        <dbReference type="ChEBI" id="CHEBI:29105"/>
        <label>1</label>
    </ligand>
</feature>
<feature type="binding site" evidence="1">
    <location>
        <position position="172"/>
    </location>
    <ligand>
        <name>Zn(2+)</name>
        <dbReference type="ChEBI" id="CHEBI:29105"/>
        <label>2</label>
    </ligand>
</feature>
<comment type="function">
    <text evidence="1">Catalyzes the hydrolysis of N-formyl-L-kynurenine to L-kynurenine, the second step in the kynurenine pathway of tryptophan degradation.</text>
</comment>
<comment type="catalytic activity">
    <reaction evidence="1">
        <text>N-formyl-L-kynurenine + H2O = L-kynurenine + formate + H(+)</text>
        <dbReference type="Rhea" id="RHEA:13009"/>
        <dbReference type="ChEBI" id="CHEBI:15377"/>
        <dbReference type="ChEBI" id="CHEBI:15378"/>
        <dbReference type="ChEBI" id="CHEBI:15740"/>
        <dbReference type="ChEBI" id="CHEBI:57959"/>
        <dbReference type="ChEBI" id="CHEBI:58629"/>
        <dbReference type="EC" id="3.5.1.9"/>
    </reaction>
</comment>
<comment type="cofactor">
    <cofactor evidence="1">
        <name>Zn(2+)</name>
        <dbReference type="ChEBI" id="CHEBI:29105"/>
    </cofactor>
    <text evidence="1">Binds 2 zinc ions per subunit.</text>
</comment>
<comment type="pathway">
    <text evidence="1">Amino-acid degradation; L-tryptophan degradation via kynurenine pathway; L-kynurenine from L-tryptophan: step 2/2.</text>
</comment>
<comment type="subunit">
    <text evidence="1">Homodimer.</text>
</comment>
<comment type="similarity">
    <text evidence="1">Belongs to the Cyclase 1 superfamily. KynB family.</text>
</comment>
<name>KYNB_BURM7</name>
<reference key="1">
    <citation type="journal article" date="2010" name="Genome Biol. Evol.">
        <title>Continuing evolution of Burkholderia mallei through genome reduction and large-scale rearrangements.</title>
        <authorList>
            <person name="Losada L."/>
            <person name="Ronning C.M."/>
            <person name="DeShazer D."/>
            <person name="Woods D."/>
            <person name="Fedorova N."/>
            <person name="Kim H.S."/>
            <person name="Shabalina S.A."/>
            <person name="Pearson T.R."/>
            <person name="Brinkac L."/>
            <person name="Tan P."/>
            <person name="Nandi T."/>
            <person name="Crabtree J."/>
            <person name="Badger J."/>
            <person name="Beckstrom-Sternberg S."/>
            <person name="Saqib M."/>
            <person name="Schutzer S.E."/>
            <person name="Keim P."/>
            <person name="Nierman W.C."/>
        </authorList>
    </citation>
    <scope>NUCLEOTIDE SEQUENCE [LARGE SCALE GENOMIC DNA]</scope>
    <source>
        <strain>NCTC 10247</strain>
    </source>
</reference>